<evidence type="ECO:0000250" key="1"/>
<evidence type="ECO:0000255" key="2"/>
<evidence type="ECO:0000305" key="3"/>
<dbReference type="EMBL" id="AL954831">
    <property type="protein sequence ID" value="CAI20612.1"/>
    <property type="status" value="ALT_SEQ"/>
    <property type="molecule type" value="Genomic_DNA"/>
</dbReference>
<dbReference type="EMBL" id="AL954831">
    <property type="protein sequence ID" value="CAI20613.1"/>
    <property type="molecule type" value="Genomic_DNA"/>
</dbReference>
<dbReference type="RefSeq" id="XP_005160640.1">
    <property type="nucleotide sequence ID" value="XM_005160583.5"/>
</dbReference>
<dbReference type="RefSeq" id="XP_021324169.1">
    <property type="nucleotide sequence ID" value="XM_021468494.2"/>
</dbReference>
<dbReference type="RefSeq" id="XP_021324170.1">
    <property type="nucleotide sequence ID" value="XM_021468495.2"/>
</dbReference>
<dbReference type="FunCoup" id="Q5SNQ7">
    <property type="interactions" value="1657"/>
</dbReference>
<dbReference type="STRING" id="7955.ENSDARP00000126448"/>
<dbReference type="ESTHER" id="danre-srac1">
    <property type="family name" value="SERAC1"/>
</dbReference>
<dbReference type="PaxDb" id="7955-ENSDARP00000126448"/>
<dbReference type="Ensembl" id="ENSDART00000151950">
    <property type="protein sequence ID" value="ENSDARP00000126448"/>
    <property type="gene ID" value="ENSDARG00000056121"/>
</dbReference>
<dbReference type="Ensembl" id="ENSDART00000192269">
    <property type="protein sequence ID" value="ENSDARP00000147756"/>
    <property type="gene ID" value="ENSDARG00000116580"/>
</dbReference>
<dbReference type="GeneID" id="568022"/>
<dbReference type="AGR" id="ZFIN:ZDB-GENE-040616-1"/>
<dbReference type="CTD" id="84947"/>
<dbReference type="ZFIN" id="ZDB-GENE-040616-1">
    <property type="gene designation" value="serac1"/>
</dbReference>
<dbReference type="eggNOG" id="KOG2029">
    <property type="taxonomic scope" value="Eukaryota"/>
</dbReference>
<dbReference type="InParanoid" id="Q5SNQ7"/>
<dbReference type="OMA" id="RRTEYIY"/>
<dbReference type="OrthoDB" id="5086500at2759"/>
<dbReference type="PhylomeDB" id="Q5SNQ7"/>
<dbReference type="TreeFam" id="TF319689"/>
<dbReference type="PRO" id="PR:Q5SNQ7"/>
<dbReference type="Proteomes" id="UP000000437">
    <property type="component" value="Chromosome 20"/>
</dbReference>
<dbReference type="Bgee" id="ENSDARG00000056121">
    <property type="expression patterns" value="Expressed in mature ovarian follicle and 21 other cell types or tissues"/>
</dbReference>
<dbReference type="GO" id="GO:0005783">
    <property type="term" value="C:endoplasmic reticulum"/>
    <property type="evidence" value="ECO:0007669"/>
    <property type="project" value="UniProtKB-SubCell"/>
</dbReference>
<dbReference type="GO" id="GO:0016020">
    <property type="term" value="C:membrane"/>
    <property type="evidence" value="ECO:0007669"/>
    <property type="project" value="UniProtKB-SubCell"/>
</dbReference>
<dbReference type="GO" id="GO:0005739">
    <property type="term" value="C:mitochondrion"/>
    <property type="evidence" value="ECO:0007669"/>
    <property type="project" value="UniProtKB-SubCell"/>
</dbReference>
<dbReference type="GO" id="GO:0008654">
    <property type="term" value="P:phospholipid biosynthetic process"/>
    <property type="evidence" value="ECO:0007669"/>
    <property type="project" value="UniProtKB-KW"/>
</dbReference>
<dbReference type="Gene3D" id="3.40.50.1820">
    <property type="entry name" value="alpha/beta hydrolase"/>
    <property type="match status" value="1"/>
</dbReference>
<dbReference type="Gene3D" id="1.25.10.10">
    <property type="entry name" value="Leucine-rich Repeat Variant"/>
    <property type="match status" value="1"/>
</dbReference>
<dbReference type="InterPro" id="IPR029058">
    <property type="entry name" value="AB_hydrolase_fold"/>
</dbReference>
<dbReference type="InterPro" id="IPR011989">
    <property type="entry name" value="ARM-like"/>
</dbReference>
<dbReference type="InterPro" id="IPR016024">
    <property type="entry name" value="ARM-type_fold"/>
</dbReference>
<dbReference type="InterPro" id="IPR052374">
    <property type="entry name" value="SERAC1"/>
</dbReference>
<dbReference type="InterPro" id="IPR055142">
    <property type="entry name" value="ZER1-like_C"/>
</dbReference>
<dbReference type="PANTHER" id="PTHR48182">
    <property type="entry name" value="PROTEIN SERAC1"/>
    <property type="match status" value="1"/>
</dbReference>
<dbReference type="PANTHER" id="PTHR48182:SF2">
    <property type="entry name" value="PROTEIN SERAC1"/>
    <property type="match status" value="1"/>
</dbReference>
<dbReference type="Pfam" id="PF22964">
    <property type="entry name" value="ZER1-like_2nd"/>
    <property type="match status" value="1"/>
</dbReference>
<dbReference type="SUPFAM" id="SSF53474">
    <property type="entry name" value="alpha/beta-Hydrolases"/>
    <property type="match status" value="1"/>
</dbReference>
<dbReference type="SUPFAM" id="SSF48371">
    <property type="entry name" value="ARM repeat"/>
    <property type="match status" value="1"/>
</dbReference>
<accession>Q5SNQ7</accession>
<accession>Q5SNQ8</accession>
<comment type="function">
    <text evidence="1">Plays an important role in the phosphatidylglycerol remodeling that is essential for both mitochondrial function and intracellular cholesterol trafficking. May catalyze the remodeling of phosphatidylglycerol and be involved in the transacylation-acylation reaction to produce phosphatidylglycerol-36:1. May be involved in bis(monoacylglycerol)phosphate biosynthetic pathway (By similarity).</text>
</comment>
<comment type="subcellular location">
    <subcellularLocation>
        <location evidence="3">Membrane</location>
        <topology evidence="3">Single-pass membrane protein</topology>
    </subcellularLocation>
    <subcellularLocation>
        <location evidence="1">Endoplasmic reticulum</location>
    </subcellularLocation>
    <subcellularLocation>
        <location evidence="1">Mitochondrion</location>
    </subcellularLocation>
    <text evidence="1">Localizes at the endoplasmic reticulum and at the endoplasmic reticulum-mitochondria interface.</text>
</comment>
<comment type="similarity">
    <text evidence="3">Belongs to the SERAC1 family.</text>
</comment>
<comment type="sequence caution" evidence="3">
    <conflict type="erroneous gene model prediction">
        <sequence resource="EMBL-CDS" id="CAI20612"/>
    </conflict>
</comment>
<keyword id="KW-0256">Endoplasmic reticulum</keyword>
<keyword id="KW-0444">Lipid biosynthesis</keyword>
<keyword id="KW-0443">Lipid metabolism</keyword>
<keyword id="KW-0472">Membrane</keyword>
<keyword id="KW-0496">Mitochondrion</keyword>
<keyword id="KW-0594">Phospholipid biosynthesis</keyword>
<keyword id="KW-1208">Phospholipid metabolism</keyword>
<keyword id="KW-1185">Reference proteome</keyword>
<keyword id="KW-0812">Transmembrane</keyword>
<keyword id="KW-1133">Transmembrane helix</keyword>
<gene>
    <name type="primary">serac1</name>
</gene>
<sequence>MSVSALRLIRVRRLSTSGPAVKRALPWRDIRRIAKVTGAIVFGGCVFITYEVVTLNQALTIDTSAILQEKQKSYIYPTHSTNREQESLASGLTIKTRRELHKAARKFLEITSRVLHHPLDEHLSHLDADPHECALWVLLKRSRSADRAVRHLAVQELAHNHHWRDYQYQTAAQVVDQRTAVALARIPNVDLRFFLPPPPLPHTEDDISIEDGLRQLLASLPQSDVDQCVQYFTSLALRESSQSLASQRGGLWCFGGNGLPYAQSLTSTPSEKVETFCLQALVQHSKVRSHCEHIVANGGLQLLQRVYQLRRDSPKIQRNIVRIIGNLALNENLHTTIVQSGWMSVLAEMIQSPHIMQASHAARALANLDRDAVRQKYQDGVYILHPQCRTNQPIKADVLFVHGLLGAAFKTWRQKDCDVTDDEKLEGVREDYTECWPKSWLAADCPNLRILSVEYDTHLSDWNSKCPVENQRKSLAFRSQELLRKLKDAGVGERPVIWVAHSMGGLLVKKMLLDAAKDPDLSSLIKNTKGILFYSVPHHGTFMAEYSVSVRYLLFPSIEVKELCRDSPALRDLNENFLNIAKDREFKVLSFAETVPTYIGPMLKILVVPAHSADLGIGDLIQVDVDHLNICKPEKKDTFLYKRTLQFIQDALGGRRIK</sequence>
<reference key="1">
    <citation type="journal article" date="2013" name="Nature">
        <title>The zebrafish reference genome sequence and its relationship to the human genome.</title>
        <authorList>
            <person name="Howe K."/>
            <person name="Clark M.D."/>
            <person name="Torroja C.F."/>
            <person name="Torrance J."/>
            <person name="Berthelot C."/>
            <person name="Muffato M."/>
            <person name="Collins J.E."/>
            <person name="Humphray S."/>
            <person name="McLaren K."/>
            <person name="Matthews L."/>
            <person name="McLaren S."/>
            <person name="Sealy I."/>
            <person name="Caccamo M."/>
            <person name="Churcher C."/>
            <person name="Scott C."/>
            <person name="Barrett J.C."/>
            <person name="Koch R."/>
            <person name="Rauch G.J."/>
            <person name="White S."/>
            <person name="Chow W."/>
            <person name="Kilian B."/>
            <person name="Quintais L.T."/>
            <person name="Guerra-Assuncao J.A."/>
            <person name="Zhou Y."/>
            <person name="Gu Y."/>
            <person name="Yen J."/>
            <person name="Vogel J.H."/>
            <person name="Eyre T."/>
            <person name="Redmond S."/>
            <person name="Banerjee R."/>
            <person name="Chi J."/>
            <person name="Fu B."/>
            <person name="Langley E."/>
            <person name="Maguire S.F."/>
            <person name="Laird G.K."/>
            <person name="Lloyd D."/>
            <person name="Kenyon E."/>
            <person name="Donaldson S."/>
            <person name="Sehra H."/>
            <person name="Almeida-King J."/>
            <person name="Loveland J."/>
            <person name="Trevanion S."/>
            <person name="Jones M."/>
            <person name="Quail M."/>
            <person name="Willey D."/>
            <person name="Hunt A."/>
            <person name="Burton J."/>
            <person name="Sims S."/>
            <person name="McLay K."/>
            <person name="Plumb B."/>
            <person name="Davis J."/>
            <person name="Clee C."/>
            <person name="Oliver K."/>
            <person name="Clark R."/>
            <person name="Riddle C."/>
            <person name="Elliot D."/>
            <person name="Threadgold G."/>
            <person name="Harden G."/>
            <person name="Ware D."/>
            <person name="Begum S."/>
            <person name="Mortimore B."/>
            <person name="Kerry G."/>
            <person name="Heath P."/>
            <person name="Phillimore B."/>
            <person name="Tracey A."/>
            <person name="Corby N."/>
            <person name="Dunn M."/>
            <person name="Johnson C."/>
            <person name="Wood J."/>
            <person name="Clark S."/>
            <person name="Pelan S."/>
            <person name="Griffiths G."/>
            <person name="Smith M."/>
            <person name="Glithero R."/>
            <person name="Howden P."/>
            <person name="Barker N."/>
            <person name="Lloyd C."/>
            <person name="Stevens C."/>
            <person name="Harley J."/>
            <person name="Holt K."/>
            <person name="Panagiotidis G."/>
            <person name="Lovell J."/>
            <person name="Beasley H."/>
            <person name="Henderson C."/>
            <person name="Gordon D."/>
            <person name="Auger K."/>
            <person name="Wright D."/>
            <person name="Collins J."/>
            <person name="Raisen C."/>
            <person name="Dyer L."/>
            <person name="Leung K."/>
            <person name="Robertson L."/>
            <person name="Ambridge K."/>
            <person name="Leongamornlert D."/>
            <person name="McGuire S."/>
            <person name="Gilderthorp R."/>
            <person name="Griffiths C."/>
            <person name="Manthravadi D."/>
            <person name="Nichol S."/>
            <person name="Barker G."/>
            <person name="Whitehead S."/>
            <person name="Kay M."/>
            <person name="Brown J."/>
            <person name="Murnane C."/>
            <person name="Gray E."/>
            <person name="Humphries M."/>
            <person name="Sycamore N."/>
            <person name="Barker D."/>
            <person name="Saunders D."/>
            <person name="Wallis J."/>
            <person name="Babbage A."/>
            <person name="Hammond S."/>
            <person name="Mashreghi-Mohammadi M."/>
            <person name="Barr L."/>
            <person name="Martin S."/>
            <person name="Wray P."/>
            <person name="Ellington A."/>
            <person name="Matthews N."/>
            <person name="Ellwood M."/>
            <person name="Woodmansey R."/>
            <person name="Clark G."/>
            <person name="Cooper J."/>
            <person name="Tromans A."/>
            <person name="Grafham D."/>
            <person name="Skuce C."/>
            <person name="Pandian R."/>
            <person name="Andrews R."/>
            <person name="Harrison E."/>
            <person name="Kimberley A."/>
            <person name="Garnett J."/>
            <person name="Fosker N."/>
            <person name="Hall R."/>
            <person name="Garner P."/>
            <person name="Kelly D."/>
            <person name="Bird C."/>
            <person name="Palmer S."/>
            <person name="Gehring I."/>
            <person name="Berger A."/>
            <person name="Dooley C.M."/>
            <person name="Ersan-Urun Z."/>
            <person name="Eser C."/>
            <person name="Geiger H."/>
            <person name="Geisler M."/>
            <person name="Karotki L."/>
            <person name="Kirn A."/>
            <person name="Konantz J."/>
            <person name="Konantz M."/>
            <person name="Oberlander M."/>
            <person name="Rudolph-Geiger S."/>
            <person name="Teucke M."/>
            <person name="Lanz C."/>
            <person name="Raddatz G."/>
            <person name="Osoegawa K."/>
            <person name="Zhu B."/>
            <person name="Rapp A."/>
            <person name="Widaa S."/>
            <person name="Langford C."/>
            <person name="Yang F."/>
            <person name="Schuster S.C."/>
            <person name="Carter N.P."/>
            <person name="Harrow J."/>
            <person name="Ning Z."/>
            <person name="Herrero J."/>
            <person name="Searle S.M."/>
            <person name="Enright A."/>
            <person name="Geisler R."/>
            <person name="Plasterk R.H."/>
            <person name="Lee C."/>
            <person name="Westerfield M."/>
            <person name="de Jong P.J."/>
            <person name="Zon L.I."/>
            <person name="Postlethwait J.H."/>
            <person name="Nusslein-Volhard C."/>
            <person name="Hubbard T.J."/>
            <person name="Roest Crollius H."/>
            <person name="Rogers J."/>
            <person name="Stemple D.L."/>
        </authorList>
    </citation>
    <scope>NUCLEOTIDE SEQUENCE [LARGE SCALE GENOMIC DNA]</scope>
    <source>
        <strain>Tuebingen</strain>
    </source>
</reference>
<protein>
    <recommendedName>
        <fullName>Protein SERAC1</fullName>
    </recommendedName>
    <alternativeName>
        <fullName>Serine active site-containing protein 1</fullName>
    </alternativeName>
</protein>
<feature type="chain" id="PRO_0000274674" description="Protein SERAC1">
    <location>
        <begin position="1"/>
        <end position="658"/>
    </location>
</feature>
<feature type="transmembrane region" description="Helical" evidence="2">
    <location>
        <begin position="33"/>
        <end position="53"/>
    </location>
</feature>
<organism>
    <name type="scientific">Danio rerio</name>
    <name type="common">Zebrafish</name>
    <name type="synonym">Brachydanio rerio</name>
    <dbReference type="NCBI Taxonomy" id="7955"/>
    <lineage>
        <taxon>Eukaryota</taxon>
        <taxon>Metazoa</taxon>
        <taxon>Chordata</taxon>
        <taxon>Craniata</taxon>
        <taxon>Vertebrata</taxon>
        <taxon>Euteleostomi</taxon>
        <taxon>Actinopterygii</taxon>
        <taxon>Neopterygii</taxon>
        <taxon>Teleostei</taxon>
        <taxon>Ostariophysi</taxon>
        <taxon>Cypriniformes</taxon>
        <taxon>Danionidae</taxon>
        <taxon>Danioninae</taxon>
        <taxon>Danio</taxon>
    </lineage>
</organism>
<proteinExistence type="inferred from homology"/>
<name>SRAC1_DANRE</name>